<protein>
    <recommendedName>
        <fullName>Cell number regulator 3</fullName>
    </recommendedName>
    <alternativeName>
        <fullName>ZmCNR03</fullName>
    </alternativeName>
</protein>
<gene>
    <name type="primary">CNR3</name>
</gene>
<proteinExistence type="evidence at transcript level"/>
<name>CNR3_MAIZE</name>
<evidence type="ECO:0000255" key="1"/>
<evidence type="ECO:0000269" key="2">
    <source>
    </source>
</evidence>
<evidence type="ECO:0000305" key="3"/>
<comment type="subcellular location">
    <subcellularLocation>
        <location evidence="3">Membrane</location>
        <topology evidence="3">Single-pass membrane protein</topology>
    </subcellularLocation>
</comment>
<comment type="tissue specificity">
    <text evidence="2">Expressed only in pollen.</text>
</comment>
<comment type="similarity">
    <text evidence="3">Belongs to the cornifelin family.</text>
</comment>
<keyword id="KW-0472">Membrane</keyword>
<keyword id="KW-1185">Reference proteome</keyword>
<keyword id="KW-0812">Transmembrane</keyword>
<keyword id="KW-1133">Transmembrane helix</keyword>
<reference key="1">
    <citation type="journal article" date="2010" name="Plant Cell">
        <title>Cell Number Regulator1 affects plant and organ size in maize: implications for crop yield enhancement and heterosis.</title>
        <authorList>
            <person name="Guo M."/>
            <person name="Rupe M.A."/>
            <person name="Dieter J.A."/>
            <person name="Zou J."/>
            <person name="Spielbauer D."/>
            <person name="Duncan K.E."/>
            <person name="Howard R.J."/>
            <person name="Hou Z."/>
            <person name="Simmons C.R."/>
        </authorList>
    </citation>
    <scope>NUCLEOTIDE SEQUENCE [MRNA]</scope>
    <scope>TISSUE SPECIFICITY</scope>
    <scope>GENE FAMILY</scope>
    <scope>NOMENCLATURE</scope>
    <source>
        <strain>cv. B73</strain>
    </source>
</reference>
<accession>D9HP19</accession>
<sequence length="167" mass="18223">MYPATTPYETASGVGVAPVAGLFPVAGEAREWSSRLLDCFDDFDICCMTFWCPCITFGRTAEIVDHGMTSCGTSAALFALIQWLSGSQCTWAFSCTYRTRLRAQHGLPEAPCADFLVHLCCLHCALCQEYRELKARGYEPVLGWEFNAQRAAAGVAMCPPASQGMGR</sequence>
<feature type="chain" id="PRO_0000407731" description="Cell number regulator 3">
    <location>
        <begin position="1"/>
        <end position="167"/>
    </location>
</feature>
<feature type="transmembrane region" description="Helical" evidence="1">
    <location>
        <begin position="67"/>
        <end position="84"/>
    </location>
</feature>
<organism>
    <name type="scientific">Zea mays</name>
    <name type="common">Maize</name>
    <dbReference type="NCBI Taxonomy" id="4577"/>
    <lineage>
        <taxon>Eukaryota</taxon>
        <taxon>Viridiplantae</taxon>
        <taxon>Streptophyta</taxon>
        <taxon>Embryophyta</taxon>
        <taxon>Tracheophyta</taxon>
        <taxon>Spermatophyta</taxon>
        <taxon>Magnoliopsida</taxon>
        <taxon>Liliopsida</taxon>
        <taxon>Poales</taxon>
        <taxon>Poaceae</taxon>
        <taxon>PACMAD clade</taxon>
        <taxon>Panicoideae</taxon>
        <taxon>Andropogonodae</taxon>
        <taxon>Andropogoneae</taxon>
        <taxon>Tripsacinae</taxon>
        <taxon>Zea</taxon>
    </lineage>
</organism>
<dbReference type="EMBL" id="HM008655">
    <property type="protein sequence ID" value="ADI48417.1"/>
    <property type="molecule type" value="mRNA"/>
</dbReference>
<dbReference type="RefSeq" id="NP_001182140.1">
    <property type="nucleotide sequence ID" value="NM_001195211.1"/>
</dbReference>
<dbReference type="STRING" id="4577.D9HP19"/>
<dbReference type="PaxDb" id="4577-GRMZM2G053387_P01"/>
<dbReference type="EnsemblPlants" id="Zm00001eb211280_T001">
    <property type="protein sequence ID" value="Zm00001eb211280_P001"/>
    <property type="gene ID" value="Zm00001eb211280"/>
</dbReference>
<dbReference type="GeneID" id="100500710"/>
<dbReference type="Gramene" id="Zm00001eb211280_T001">
    <property type="protein sequence ID" value="Zm00001eb211280_P001"/>
    <property type="gene ID" value="Zm00001eb211280"/>
</dbReference>
<dbReference type="KEGG" id="zma:100500710"/>
<dbReference type="eggNOG" id="ENOG502S7UD">
    <property type="taxonomic scope" value="Eukaryota"/>
</dbReference>
<dbReference type="HOGENOM" id="CLU_083147_1_1_1"/>
<dbReference type="InParanoid" id="D9HP19"/>
<dbReference type="OMA" id="PHPMMAV"/>
<dbReference type="OrthoDB" id="1045822at2759"/>
<dbReference type="Proteomes" id="UP000007305">
    <property type="component" value="Chromosome 5"/>
</dbReference>
<dbReference type="ExpressionAtlas" id="D9HP19">
    <property type="expression patterns" value="baseline"/>
</dbReference>
<dbReference type="GO" id="GO:0016020">
    <property type="term" value="C:membrane"/>
    <property type="evidence" value="ECO:0007669"/>
    <property type="project" value="UniProtKB-SubCell"/>
</dbReference>
<dbReference type="InterPro" id="IPR006461">
    <property type="entry name" value="PLAC_motif_containing"/>
</dbReference>
<dbReference type="NCBIfam" id="TIGR01571">
    <property type="entry name" value="A_thal_Cys_rich"/>
    <property type="match status" value="1"/>
</dbReference>
<dbReference type="PANTHER" id="PTHR15907">
    <property type="entry name" value="DUF614 FAMILY PROTEIN-RELATED"/>
    <property type="match status" value="1"/>
</dbReference>
<dbReference type="Pfam" id="PF04749">
    <property type="entry name" value="PLAC8"/>
    <property type="match status" value="1"/>
</dbReference>